<dbReference type="EMBL" id="CP000505">
    <property type="protein sequence ID" value="ABL77668.1"/>
    <property type="molecule type" value="Genomic_DNA"/>
</dbReference>
<dbReference type="RefSeq" id="WP_011751933.1">
    <property type="nucleotide sequence ID" value="NC_008698.1"/>
</dbReference>
<dbReference type="SMR" id="A1RWT8"/>
<dbReference type="STRING" id="368408.Tpen_0258"/>
<dbReference type="EnsemblBacteria" id="ABL77668">
    <property type="protein sequence ID" value="ABL77668"/>
    <property type="gene ID" value="Tpen_0258"/>
</dbReference>
<dbReference type="GeneID" id="4601850"/>
<dbReference type="KEGG" id="tpe:Tpen_0258"/>
<dbReference type="eggNOG" id="arCOG04239">
    <property type="taxonomic scope" value="Archaea"/>
</dbReference>
<dbReference type="HOGENOM" id="CLU_089738_1_1_2"/>
<dbReference type="OrthoDB" id="10429at2157"/>
<dbReference type="Proteomes" id="UP000000641">
    <property type="component" value="Chromosome"/>
</dbReference>
<dbReference type="GO" id="GO:0015935">
    <property type="term" value="C:small ribosomal subunit"/>
    <property type="evidence" value="ECO:0007669"/>
    <property type="project" value="InterPro"/>
</dbReference>
<dbReference type="GO" id="GO:0019843">
    <property type="term" value="F:rRNA binding"/>
    <property type="evidence" value="ECO:0007669"/>
    <property type="project" value="UniProtKB-UniRule"/>
</dbReference>
<dbReference type="GO" id="GO:0003735">
    <property type="term" value="F:structural constituent of ribosome"/>
    <property type="evidence" value="ECO:0007669"/>
    <property type="project" value="InterPro"/>
</dbReference>
<dbReference type="GO" id="GO:0042274">
    <property type="term" value="P:ribosomal small subunit biogenesis"/>
    <property type="evidence" value="ECO:0007669"/>
    <property type="project" value="TreeGrafter"/>
</dbReference>
<dbReference type="GO" id="GO:0006412">
    <property type="term" value="P:translation"/>
    <property type="evidence" value="ECO:0007669"/>
    <property type="project" value="UniProtKB-UniRule"/>
</dbReference>
<dbReference type="CDD" id="cd00165">
    <property type="entry name" value="S4"/>
    <property type="match status" value="1"/>
</dbReference>
<dbReference type="Gene3D" id="3.10.290.10">
    <property type="entry name" value="RNA-binding S4 domain"/>
    <property type="match status" value="1"/>
</dbReference>
<dbReference type="HAMAP" id="MF_01306_A">
    <property type="entry name" value="Ribosomal_uS4_A"/>
    <property type="match status" value="1"/>
</dbReference>
<dbReference type="InterPro" id="IPR022801">
    <property type="entry name" value="Ribosomal_uS4"/>
</dbReference>
<dbReference type="InterPro" id="IPR022802">
    <property type="entry name" value="Ribosomal_uS4_arc"/>
</dbReference>
<dbReference type="InterPro" id="IPR018079">
    <property type="entry name" value="Ribosomal_uS4_CS"/>
</dbReference>
<dbReference type="InterPro" id="IPR005710">
    <property type="entry name" value="Ribosomal_uS4_euk/arc"/>
</dbReference>
<dbReference type="InterPro" id="IPR001912">
    <property type="entry name" value="Ribosomal_uS4_N"/>
</dbReference>
<dbReference type="InterPro" id="IPR002942">
    <property type="entry name" value="S4_RNA-bd"/>
</dbReference>
<dbReference type="InterPro" id="IPR036986">
    <property type="entry name" value="S4_RNA-bd_sf"/>
</dbReference>
<dbReference type="NCBIfam" id="NF003139">
    <property type="entry name" value="PRK04051.1"/>
    <property type="match status" value="1"/>
</dbReference>
<dbReference type="NCBIfam" id="TIGR01018">
    <property type="entry name" value="uS4_arch"/>
    <property type="match status" value="1"/>
</dbReference>
<dbReference type="PANTHER" id="PTHR11831">
    <property type="entry name" value="30S 40S RIBOSOMAL PROTEIN"/>
    <property type="match status" value="1"/>
</dbReference>
<dbReference type="PANTHER" id="PTHR11831:SF5">
    <property type="entry name" value="40S RIBOSOMAL PROTEIN S9"/>
    <property type="match status" value="1"/>
</dbReference>
<dbReference type="Pfam" id="PF00163">
    <property type="entry name" value="Ribosomal_S4"/>
    <property type="match status" value="1"/>
</dbReference>
<dbReference type="Pfam" id="PF01479">
    <property type="entry name" value="S4"/>
    <property type="match status" value="1"/>
</dbReference>
<dbReference type="SMART" id="SM01390">
    <property type="entry name" value="Ribosomal_S4"/>
    <property type="match status" value="1"/>
</dbReference>
<dbReference type="SMART" id="SM00363">
    <property type="entry name" value="S4"/>
    <property type="match status" value="1"/>
</dbReference>
<dbReference type="SUPFAM" id="SSF55174">
    <property type="entry name" value="Alpha-L RNA-binding motif"/>
    <property type="match status" value="1"/>
</dbReference>
<dbReference type="PROSITE" id="PS00632">
    <property type="entry name" value="RIBOSOMAL_S4"/>
    <property type="match status" value="1"/>
</dbReference>
<dbReference type="PROSITE" id="PS50889">
    <property type="entry name" value="S4"/>
    <property type="match status" value="1"/>
</dbReference>
<proteinExistence type="inferred from homology"/>
<accession>A1RWT8</accession>
<feature type="chain" id="PRO_0000293414" description="Small ribosomal subunit protein uS4">
    <location>
        <begin position="1"/>
        <end position="172"/>
    </location>
</feature>
<feature type="domain" description="S4 RNA-binding" evidence="1">
    <location>
        <begin position="104"/>
        <end position="168"/>
    </location>
</feature>
<protein>
    <recommendedName>
        <fullName evidence="1">Small ribosomal subunit protein uS4</fullName>
    </recommendedName>
    <alternativeName>
        <fullName evidence="2">30S ribosomal protein S4</fullName>
    </alternativeName>
</protein>
<name>RS4_THEPD</name>
<organism>
    <name type="scientific">Thermofilum pendens (strain DSM 2475 / Hrk 5)</name>
    <dbReference type="NCBI Taxonomy" id="368408"/>
    <lineage>
        <taxon>Archaea</taxon>
        <taxon>Thermoproteota</taxon>
        <taxon>Thermoprotei</taxon>
        <taxon>Thermofilales</taxon>
        <taxon>Thermofilaceae</taxon>
        <taxon>Thermofilum</taxon>
    </lineage>
</organism>
<gene>
    <name evidence="1" type="primary">rps4</name>
    <name type="ordered locus">Tpen_0258</name>
</gene>
<sequence length="172" mass="19793">MGDPKKPRKKWQGPSHPWRKETLLEEMQLVGEYGLRNKRELWIAKSLLREIRAKARKLLALPAEERIKLEKPLVSRLYKMGLLPSEDASLDDVLSLTVRDVLERRLQTIVYRKGLATTIRHARQLITHGHIAVNSRRVRSPGYLVSRDEENFISYYEGSPLAKMAQGGAQNV</sequence>
<evidence type="ECO:0000255" key="1">
    <source>
        <dbReference type="HAMAP-Rule" id="MF_01306"/>
    </source>
</evidence>
<evidence type="ECO:0000305" key="2"/>
<comment type="function">
    <text evidence="1">One of the primary rRNA binding proteins, it binds directly to 16S rRNA where it nucleates assembly of the body of the 30S subunit.</text>
</comment>
<comment type="function">
    <text evidence="1">With S5 and S12 plays an important role in translational accuracy.</text>
</comment>
<comment type="subunit">
    <text evidence="1">Part of the 30S ribosomal subunit. Contacts protein S5. The interaction surface between S4 and S5 is involved in control of translational fidelity.</text>
</comment>
<comment type="similarity">
    <text evidence="1">Belongs to the universal ribosomal protein uS4 family.</text>
</comment>
<keyword id="KW-1185">Reference proteome</keyword>
<keyword id="KW-0687">Ribonucleoprotein</keyword>
<keyword id="KW-0689">Ribosomal protein</keyword>
<keyword id="KW-0694">RNA-binding</keyword>
<keyword id="KW-0699">rRNA-binding</keyword>
<reference key="1">
    <citation type="journal article" date="2008" name="J. Bacteriol.">
        <title>Genome sequence of Thermofilum pendens reveals an exceptional loss of biosynthetic pathways without genome reduction.</title>
        <authorList>
            <person name="Anderson I."/>
            <person name="Rodriguez J."/>
            <person name="Susanti D."/>
            <person name="Porat I."/>
            <person name="Reich C."/>
            <person name="Ulrich L.E."/>
            <person name="Elkins J.G."/>
            <person name="Mavromatis K."/>
            <person name="Lykidis A."/>
            <person name="Kim E."/>
            <person name="Thompson L.S."/>
            <person name="Nolan M."/>
            <person name="Land M."/>
            <person name="Copeland A."/>
            <person name="Lapidus A."/>
            <person name="Lucas S."/>
            <person name="Detter C."/>
            <person name="Zhulin I.B."/>
            <person name="Olsen G.J."/>
            <person name="Whitman W."/>
            <person name="Mukhopadhyay B."/>
            <person name="Bristow J."/>
            <person name="Kyrpides N."/>
        </authorList>
    </citation>
    <scope>NUCLEOTIDE SEQUENCE [LARGE SCALE GENOMIC DNA]</scope>
    <source>
        <strain>DSM 2475 / Hrk 5</strain>
    </source>
</reference>